<evidence type="ECO:0000250" key="1"/>
<evidence type="ECO:0000255" key="2"/>
<evidence type="ECO:0000305" key="3"/>
<feature type="chain" id="PRO_0000117886" description="NADH-ubiquinone oxidoreductase chain 4">
    <location>
        <begin position="1"/>
        <end position="447"/>
    </location>
</feature>
<feature type="transmembrane region" description="Helical" evidence="2">
    <location>
        <begin position="28"/>
        <end position="48"/>
    </location>
</feature>
<feature type="transmembrane region" description="Helical" evidence="2">
    <location>
        <begin position="56"/>
        <end position="76"/>
    </location>
</feature>
<feature type="transmembrane region" description="Helical" evidence="2">
    <location>
        <begin position="89"/>
        <end position="109"/>
    </location>
</feature>
<feature type="transmembrane region" description="Helical" evidence="2">
    <location>
        <begin position="110"/>
        <end position="130"/>
    </location>
</feature>
<feature type="transmembrane region" description="Helical" evidence="2">
    <location>
        <begin position="141"/>
        <end position="161"/>
    </location>
</feature>
<feature type="transmembrane region" description="Helical" evidence="2">
    <location>
        <begin position="183"/>
        <end position="203"/>
    </location>
</feature>
<feature type="transmembrane region" description="Helical" evidence="2">
    <location>
        <begin position="213"/>
        <end position="233"/>
    </location>
</feature>
<feature type="transmembrane region" description="Helical" evidence="2">
    <location>
        <begin position="246"/>
        <end position="266"/>
    </location>
</feature>
<feature type="transmembrane region" description="Helical" evidence="2">
    <location>
        <begin position="273"/>
        <end position="293"/>
    </location>
</feature>
<feature type="transmembrane region" description="Helical" evidence="2">
    <location>
        <begin position="298"/>
        <end position="318"/>
    </location>
</feature>
<feature type="transmembrane region" description="Helical" evidence="2">
    <location>
        <begin position="331"/>
        <end position="351"/>
    </location>
</feature>
<feature type="transmembrane region" description="Helical" evidence="2">
    <location>
        <begin position="374"/>
        <end position="394"/>
    </location>
</feature>
<feature type="transmembrane region" description="Helical" evidence="2">
    <location>
        <begin position="409"/>
        <end position="431"/>
    </location>
</feature>
<protein>
    <recommendedName>
        <fullName>NADH-ubiquinone oxidoreductase chain 4</fullName>
        <ecNumber>7.1.1.2</ecNumber>
    </recommendedName>
    <alternativeName>
        <fullName>NADH dehydrogenase subunit 4</fullName>
    </alternativeName>
</protein>
<geneLocation type="mitochondrion"/>
<keyword id="KW-0249">Electron transport</keyword>
<keyword id="KW-0472">Membrane</keyword>
<keyword id="KW-0496">Mitochondrion</keyword>
<keyword id="KW-0520">NAD</keyword>
<keyword id="KW-1185">Reference proteome</keyword>
<keyword id="KW-0679">Respiratory chain</keyword>
<keyword id="KW-1278">Translocase</keyword>
<keyword id="KW-0812">Transmembrane</keyword>
<keyword id="KW-1133">Transmembrane helix</keyword>
<keyword id="KW-0813">Transport</keyword>
<keyword id="KW-0830">Ubiquinone</keyword>
<gene>
    <name type="primary">mt:ND4</name>
    <name type="synonym">ND4</name>
</gene>
<sequence length="447" mass="51280">MLKFIFMLMFMFPLSFLKNFYWTVQNLIFLLTFMFMINLSSLNYFNYISYYFGLDMVSYGLILLSFWICGLMLMASEKVFSTNNYEKLFVFMILFLLFMLVLTFSSMSVFMFYLFFEASLIPTLFLILGWGYQPERLQAGVYLLFYTLLASLPLLIGIFYILNSKNTLSFTLLLNYSFSNFNLLYLSLVFAFLVKMPMFLVHLWLPKAHVEAPVSGSMILAGILLKLGGYGLLRMFSLLQISGVKYNYWWISISLVGGVLISLVCLRQTDLKALIAYSSVAHMGIVLSGLLTMTYWGLTGSYALMIAHGLCSSGLFCLANISYERMGSRSLLINKGLLNFMPTLSLWWFLLCSGNMAAPPTLNLLGEISLLNSIVSWSWITMIMLSFLSFFSAAYSLYLFAYSQHGKIYSGVYFFSVGTTREFLLLMLHWLPLNLLILKSNFCMLWI</sequence>
<comment type="function">
    <text evidence="1">Core subunit of the mitochondrial membrane respiratory chain NADH dehydrogenase (Complex I) that is believed to belong to the minimal assembly required for catalysis. Complex I functions in the transfer of electrons from NADH to the respiratory chain. The immediate electron acceptor for the enzyme is believed to be ubiquinone (By similarity).</text>
</comment>
<comment type="catalytic activity">
    <reaction>
        <text>a ubiquinone + NADH + 5 H(+)(in) = a ubiquinol + NAD(+) + 4 H(+)(out)</text>
        <dbReference type="Rhea" id="RHEA:29091"/>
        <dbReference type="Rhea" id="RHEA-COMP:9565"/>
        <dbReference type="Rhea" id="RHEA-COMP:9566"/>
        <dbReference type="ChEBI" id="CHEBI:15378"/>
        <dbReference type="ChEBI" id="CHEBI:16389"/>
        <dbReference type="ChEBI" id="CHEBI:17976"/>
        <dbReference type="ChEBI" id="CHEBI:57540"/>
        <dbReference type="ChEBI" id="CHEBI:57945"/>
        <dbReference type="EC" id="7.1.1.2"/>
    </reaction>
</comment>
<comment type="subcellular location">
    <subcellularLocation>
        <location evidence="1">Mitochondrion membrane</location>
        <topology evidence="1">Multi-pass membrane protein</topology>
    </subcellularLocation>
</comment>
<comment type="similarity">
    <text evidence="3">Belongs to the complex I subunit 4 family.</text>
</comment>
<proteinExistence type="inferred from homology"/>
<reference key="1">
    <citation type="journal article" date="1993" name="Insect Mol. Biol.">
        <title>The mitochondrial genome of the mosquito Anopheles gambiae: DNA sequence, genome organization, and comparisons with mitochondrial sequences of other insects.</title>
        <authorList>
            <person name="Beard C.B."/>
            <person name="Hamm D.M."/>
            <person name="Collins F.H."/>
        </authorList>
    </citation>
    <scope>NUCLEOTIDE SEQUENCE [LARGE SCALE GENOMIC DNA]</scope>
    <source>
        <strain>G3</strain>
    </source>
</reference>
<accession>P34852</accession>
<dbReference type="EC" id="7.1.1.2"/>
<dbReference type="EMBL" id="L20934">
    <property type="protein sequence ID" value="AAD12198.1"/>
    <property type="molecule type" value="Genomic_DNA"/>
</dbReference>
<dbReference type="PIR" id="T09809">
    <property type="entry name" value="T09809"/>
</dbReference>
<dbReference type="RefSeq" id="NP_008077.1">
    <property type="nucleotide sequence ID" value="NC_002084.1"/>
</dbReference>
<dbReference type="SMR" id="P34852"/>
<dbReference type="FunCoup" id="P34852">
    <property type="interactions" value="134"/>
</dbReference>
<dbReference type="STRING" id="7165.P34852"/>
<dbReference type="PaxDb" id="7165-AGAP028382-PA"/>
<dbReference type="EnsemblMetazoa" id="AGAP028382-RA">
    <property type="protein sequence ID" value="AGAP028382-PA"/>
    <property type="gene ID" value="AGAP028382"/>
</dbReference>
<dbReference type="VEuPathDB" id="VectorBase:AGAMI1_008461"/>
<dbReference type="VEuPathDB" id="VectorBase:AGAP028382"/>
<dbReference type="eggNOG" id="KOG4845">
    <property type="taxonomic scope" value="Eukaryota"/>
</dbReference>
<dbReference type="HOGENOM" id="CLU_007100_4_0_1"/>
<dbReference type="InParanoid" id="P34852"/>
<dbReference type="OMA" id="ITRWGNQ"/>
<dbReference type="Proteomes" id="UP000007062">
    <property type="component" value="Mitochondrion"/>
</dbReference>
<dbReference type="GO" id="GO:0031966">
    <property type="term" value="C:mitochondrial membrane"/>
    <property type="evidence" value="ECO:0007669"/>
    <property type="project" value="UniProtKB-SubCell"/>
</dbReference>
<dbReference type="GO" id="GO:0045271">
    <property type="term" value="C:respiratory chain complex I"/>
    <property type="evidence" value="ECO:0000318"/>
    <property type="project" value="GO_Central"/>
</dbReference>
<dbReference type="GO" id="GO:0008137">
    <property type="term" value="F:NADH dehydrogenase (ubiquinone) activity"/>
    <property type="evidence" value="ECO:0007669"/>
    <property type="project" value="UniProtKB-EC"/>
</dbReference>
<dbReference type="GO" id="GO:0048039">
    <property type="term" value="F:ubiquinone binding"/>
    <property type="evidence" value="ECO:0000318"/>
    <property type="project" value="GO_Central"/>
</dbReference>
<dbReference type="GO" id="GO:0009060">
    <property type="term" value="P:aerobic respiration"/>
    <property type="evidence" value="ECO:0000318"/>
    <property type="project" value="GO_Central"/>
</dbReference>
<dbReference type="GO" id="GO:0042773">
    <property type="term" value="P:ATP synthesis coupled electron transport"/>
    <property type="evidence" value="ECO:0007669"/>
    <property type="project" value="InterPro"/>
</dbReference>
<dbReference type="GO" id="GO:0015990">
    <property type="term" value="P:electron transport coupled proton transport"/>
    <property type="evidence" value="ECO:0000318"/>
    <property type="project" value="GO_Central"/>
</dbReference>
<dbReference type="InterPro" id="IPR000260">
    <property type="entry name" value="NADH4_N"/>
</dbReference>
<dbReference type="InterPro" id="IPR003918">
    <property type="entry name" value="NADH_UbQ_OxRdtase"/>
</dbReference>
<dbReference type="InterPro" id="IPR001750">
    <property type="entry name" value="ND/Mrp_TM"/>
</dbReference>
<dbReference type="PANTHER" id="PTHR43507">
    <property type="entry name" value="NADH-UBIQUINONE OXIDOREDUCTASE CHAIN 4"/>
    <property type="match status" value="1"/>
</dbReference>
<dbReference type="PANTHER" id="PTHR43507:SF20">
    <property type="entry name" value="NADH-UBIQUINONE OXIDOREDUCTASE CHAIN 4"/>
    <property type="match status" value="1"/>
</dbReference>
<dbReference type="Pfam" id="PF01059">
    <property type="entry name" value="Oxidored_q5_N"/>
    <property type="match status" value="1"/>
</dbReference>
<dbReference type="Pfam" id="PF00361">
    <property type="entry name" value="Proton_antipo_M"/>
    <property type="match status" value="1"/>
</dbReference>
<dbReference type="PRINTS" id="PR01437">
    <property type="entry name" value="NUOXDRDTASE4"/>
</dbReference>
<name>NU4M_ANOGA</name>
<organism>
    <name type="scientific">Anopheles gambiae</name>
    <name type="common">African malaria mosquito</name>
    <dbReference type="NCBI Taxonomy" id="7165"/>
    <lineage>
        <taxon>Eukaryota</taxon>
        <taxon>Metazoa</taxon>
        <taxon>Ecdysozoa</taxon>
        <taxon>Arthropoda</taxon>
        <taxon>Hexapoda</taxon>
        <taxon>Insecta</taxon>
        <taxon>Pterygota</taxon>
        <taxon>Neoptera</taxon>
        <taxon>Endopterygota</taxon>
        <taxon>Diptera</taxon>
        <taxon>Nematocera</taxon>
        <taxon>Culicoidea</taxon>
        <taxon>Culicidae</taxon>
        <taxon>Anophelinae</taxon>
        <taxon>Anopheles</taxon>
    </lineage>
</organism>